<evidence type="ECO:0000255" key="1">
    <source>
        <dbReference type="HAMAP-Rule" id="MF_00332"/>
    </source>
</evidence>
<keyword id="KW-0067">ATP-binding</keyword>
<keyword id="KW-0143">Chaperone</keyword>
<keyword id="KW-0547">Nucleotide-binding</keyword>
<keyword id="KW-0597">Phosphoprotein</keyword>
<keyword id="KW-1185">Reference proteome</keyword>
<keyword id="KW-0346">Stress response</keyword>
<organism>
    <name type="scientific">Thermosipho africanus (strain TCF52B)</name>
    <dbReference type="NCBI Taxonomy" id="484019"/>
    <lineage>
        <taxon>Bacteria</taxon>
        <taxon>Thermotogati</taxon>
        <taxon>Thermotogota</taxon>
        <taxon>Thermotogae</taxon>
        <taxon>Thermotogales</taxon>
        <taxon>Fervidobacteriaceae</taxon>
        <taxon>Thermosipho</taxon>
    </lineage>
</organism>
<accession>B7ID00</accession>
<name>DNAK_THEAB</name>
<feature type="chain" id="PRO_1000119766" description="Chaperone protein DnaK">
    <location>
        <begin position="1"/>
        <end position="598"/>
    </location>
</feature>
<feature type="modified residue" description="Phosphothreonine; by autocatalysis" evidence="1">
    <location>
        <position position="180"/>
    </location>
</feature>
<dbReference type="EMBL" id="CP001185">
    <property type="protein sequence ID" value="ACJ75877.1"/>
    <property type="molecule type" value="Genomic_DNA"/>
</dbReference>
<dbReference type="RefSeq" id="WP_004101858.1">
    <property type="nucleotide sequence ID" value="NC_011653.1"/>
</dbReference>
<dbReference type="SMR" id="B7ID00"/>
<dbReference type="STRING" id="484019.THA_1433"/>
<dbReference type="KEGG" id="taf:THA_1433"/>
<dbReference type="eggNOG" id="COG0443">
    <property type="taxonomic scope" value="Bacteria"/>
</dbReference>
<dbReference type="HOGENOM" id="CLU_005965_2_4_0"/>
<dbReference type="OrthoDB" id="9766019at2"/>
<dbReference type="Proteomes" id="UP000002453">
    <property type="component" value="Chromosome"/>
</dbReference>
<dbReference type="GO" id="GO:0005524">
    <property type="term" value="F:ATP binding"/>
    <property type="evidence" value="ECO:0007669"/>
    <property type="project" value="UniProtKB-UniRule"/>
</dbReference>
<dbReference type="GO" id="GO:0140662">
    <property type="term" value="F:ATP-dependent protein folding chaperone"/>
    <property type="evidence" value="ECO:0007669"/>
    <property type="project" value="InterPro"/>
</dbReference>
<dbReference type="GO" id="GO:0051082">
    <property type="term" value="F:unfolded protein binding"/>
    <property type="evidence" value="ECO:0007669"/>
    <property type="project" value="InterPro"/>
</dbReference>
<dbReference type="CDD" id="cd10234">
    <property type="entry name" value="ASKHA_NBD_HSP70_DnaK-like"/>
    <property type="match status" value="1"/>
</dbReference>
<dbReference type="FunFam" id="3.30.30.30:FF:000014">
    <property type="entry name" value="Chaperone protein DnaK"/>
    <property type="match status" value="1"/>
</dbReference>
<dbReference type="FunFam" id="2.60.34.10:FF:000014">
    <property type="entry name" value="Chaperone protein DnaK HSP70"/>
    <property type="match status" value="1"/>
</dbReference>
<dbReference type="FunFam" id="1.20.1270.10:FF:000001">
    <property type="entry name" value="Molecular chaperone DnaK"/>
    <property type="match status" value="1"/>
</dbReference>
<dbReference type="FunFam" id="3.30.420.40:FF:000071">
    <property type="entry name" value="Molecular chaperone DnaK"/>
    <property type="match status" value="1"/>
</dbReference>
<dbReference type="FunFam" id="3.90.640.10:FF:000003">
    <property type="entry name" value="Molecular chaperone DnaK"/>
    <property type="match status" value="1"/>
</dbReference>
<dbReference type="Gene3D" id="1.20.1270.10">
    <property type="match status" value="1"/>
</dbReference>
<dbReference type="Gene3D" id="3.30.30.30">
    <property type="match status" value="1"/>
</dbReference>
<dbReference type="Gene3D" id="3.30.420.40">
    <property type="match status" value="3"/>
</dbReference>
<dbReference type="Gene3D" id="3.90.640.10">
    <property type="entry name" value="Actin, Chain A, domain 4"/>
    <property type="match status" value="1"/>
</dbReference>
<dbReference type="Gene3D" id="2.60.34.10">
    <property type="entry name" value="Substrate Binding Domain Of DNAk, Chain A, domain 1"/>
    <property type="match status" value="1"/>
</dbReference>
<dbReference type="HAMAP" id="MF_00332">
    <property type="entry name" value="DnaK"/>
    <property type="match status" value="1"/>
</dbReference>
<dbReference type="InterPro" id="IPR043129">
    <property type="entry name" value="ATPase_NBD"/>
</dbReference>
<dbReference type="InterPro" id="IPR012725">
    <property type="entry name" value="Chaperone_DnaK"/>
</dbReference>
<dbReference type="InterPro" id="IPR018181">
    <property type="entry name" value="Heat_shock_70_CS"/>
</dbReference>
<dbReference type="InterPro" id="IPR029048">
    <property type="entry name" value="HSP70_C_sf"/>
</dbReference>
<dbReference type="InterPro" id="IPR029047">
    <property type="entry name" value="HSP70_peptide-bd_sf"/>
</dbReference>
<dbReference type="InterPro" id="IPR013126">
    <property type="entry name" value="Hsp_70_fam"/>
</dbReference>
<dbReference type="NCBIfam" id="NF001413">
    <property type="entry name" value="PRK00290.1"/>
    <property type="match status" value="1"/>
</dbReference>
<dbReference type="NCBIfam" id="TIGR02350">
    <property type="entry name" value="prok_dnaK"/>
    <property type="match status" value="1"/>
</dbReference>
<dbReference type="PANTHER" id="PTHR19375">
    <property type="entry name" value="HEAT SHOCK PROTEIN 70KDA"/>
    <property type="match status" value="1"/>
</dbReference>
<dbReference type="Pfam" id="PF00012">
    <property type="entry name" value="HSP70"/>
    <property type="match status" value="1"/>
</dbReference>
<dbReference type="PRINTS" id="PR00301">
    <property type="entry name" value="HEATSHOCK70"/>
</dbReference>
<dbReference type="SUPFAM" id="SSF53067">
    <property type="entry name" value="Actin-like ATPase domain"/>
    <property type="match status" value="2"/>
</dbReference>
<dbReference type="SUPFAM" id="SSF100934">
    <property type="entry name" value="Heat shock protein 70kD (HSP70), C-terminal subdomain"/>
    <property type="match status" value="1"/>
</dbReference>
<dbReference type="SUPFAM" id="SSF100920">
    <property type="entry name" value="Heat shock protein 70kD (HSP70), peptide-binding domain"/>
    <property type="match status" value="1"/>
</dbReference>
<dbReference type="PROSITE" id="PS00297">
    <property type="entry name" value="HSP70_1"/>
    <property type="match status" value="1"/>
</dbReference>
<dbReference type="PROSITE" id="PS00329">
    <property type="entry name" value="HSP70_2"/>
    <property type="match status" value="1"/>
</dbReference>
<dbReference type="PROSITE" id="PS01036">
    <property type="entry name" value="HSP70_3"/>
    <property type="match status" value="1"/>
</dbReference>
<sequence>MANKKEYVVGIDLGTTNSVIAWMKPDSSVEVIPNAEGARTTPSIVAFSKTGEILVGEPAKRQLILNSERTIKSIKRKMGTDYKVKIDDKDYTPQEISAFILKKLKRDAEEYLGGEVKKAVITCPAYFNDAQRQATKEAGIIAGFEVLRIINEPTAAALAYGLDKKGKEEKVLVYDLGGGTFDVSILEIGDGVIQVVATSGNNHLGGDDFDQRIIDWLAEEFKKQHGVDLREDKQALQRLRDAAEKAKIELSSKLETDISLPYITATAEGPLHLEMRLTRSMFESLTRDLVEMTRKPVEQALSDAKLKPEDIDEIILVGGMTRVPMVQKFIKEIFGKDPNRGVNPDEAVAVGAAIQAAILAGEEGAQGKDIVLVDVTPLTLGIEVKGGLFEPIIPRNSTIPIKKSKVFTTAEDGQTEVEVRVYQGERPIAADNILLGSFRLVGIPPAPRGVPQIEVTFDIDSDGIVHVSAKDLGTGKEQSMVVSGRHQLSEDDINKIIEDAKKFEEQDKRRKEEVELKNKADDLAYYIEKSLKEYGDKIPADEKDKLENLVKDLRDAINKNDIPRIKMLFDELDREKTKIGEYIYKQNQQGGNQQAENQ</sequence>
<reference key="1">
    <citation type="journal article" date="2009" name="J. Bacteriol.">
        <title>The genome of Thermosipho africanus TCF52B: lateral genetic connections to the Firmicutes and Archaea.</title>
        <authorList>
            <person name="Nesboe C.L."/>
            <person name="Bapteste E."/>
            <person name="Curtis B."/>
            <person name="Dahle H."/>
            <person name="Lopez P."/>
            <person name="Macleod D."/>
            <person name="Dlutek M."/>
            <person name="Bowman S."/>
            <person name="Zhaxybayeva O."/>
            <person name="Birkeland N.-K."/>
            <person name="Doolittle W.F."/>
        </authorList>
    </citation>
    <scope>NUCLEOTIDE SEQUENCE [LARGE SCALE GENOMIC DNA]</scope>
    <source>
        <strain>TCF52B</strain>
    </source>
</reference>
<gene>
    <name evidence="1" type="primary">dnaK</name>
    <name type="ordered locus">THA_1433</name>
</gene>
<proteinExistence type="inferred from homology"/>
<comment type="function">
    <text evidence="1">Acts as a chaperone.</text>
</comment>
<comment type="induction">
    <text evidence="1">By stress conditions e.g. heat shock.</text>
</comment>
<comment type="similarity">
    <text evidence="1">Belongs to the heat shock protein 70 family.</text>
</comment>
<protein>
    <recommendedName>
        <fullName evidence="1">Chaperone protein DnaK</fullName>
    </recommendedName>
    <alternativeName>
        <fullName evidence="1">HSP70</fullName>
    </alternativeName>
    <alternativeName>
        <fullName evidence="1">Heat shock 70 kDa protein</fullName>
    </alternativeName>
    <alternativeName>
        <fullName evidence="1">Heat shock protein 70</fullName>
    </alternativeName>
</protein>